<reference key="1">
    <citation type="journal article" date="2001" name="Nature">
        <title>Genome sequence of Yersinia pestis, the causative agent of plague.</title>
        <authorList>
            <person name="Parkhill J."/>
            <person name="Wren B.W."/>
            <person name="Thomson N.R."/>
            <person name="Titball R.W."/>
            <person name="Holden M.T.G."/>
            <person name="Prentice M.B."/>
            <person name="Sebaihia M."/>
            <person name="James K.D."/>
            <person name="Churcher C.M."/>
            <person name="Mungall K.L."/>
            <person name="Baker S."/>
            <person name="Basham D."/>
            <person name="Bentley S.D."/>
            <person name="Brooks K."/>
            <person name="Cerdeno-Tarraga A.-M."/>
            <person name="Chillingworth T."/>
            <person name="Cronin A."/>
            <person name="Davies R.M."/>
            <person name="Davis P."/>
            <person name="Dougan G."/>
            <person name="Feltwell T."/>
            <person name="Hamlin N."/>
            <person name="Holroyd S."/>
            <person name="Jagels K."/>
            <person name="Karlyshev A.V."/>
            <person name="Leather S."/>
            <person name="Moule S."/>
            <person name="Oyston P.C.F."/>
            <person name="Quail M.A."/>
            <person name="Rutherford K.M."/>
            <person name="Simmonds M."/>
            <person name="Skelton J."/>
            <person name="Stevens K."/>
            <person name="Whitehead S."/>
            <person name="Barrell B.G."/>
        </authorList>
    </citation>
    <scope>NUCLEOTIDE SEQUENCE [LARGE SCALE GENOMIC DNA]</scope>
    <source>
        <strain>CO-92 / Biovar Orientalis</strain>
    </source>
</reference>
<reference key="2">
    <citation type="journal article" date="2002" name="J. Bacteriol.">
        <title>Genome sequence of Yersinia pestis KIM.</title>
        <authorList>
            <person name="Deng W."/>
            <person name="Burland V."/>
            <person name="Plunkett G. III"/>
            <person name="Boutin A."/>
            <person name="Mayhew G.F."/>
            <person name="Liss P."/>
            <person name="Perna N.T."/>
            <person name="Rose D.J."/>
            <person name="Mau B."/>
            <person name="Zhou S."/>
            <person name="Schwartz D.C."/>
            <person name="Fetherston J.D."/>
            <person name="Lindler L.E."/>
            <person name="Brubaker R.R."/>
            <person name="Plano G.V."/>
            <person name="Straley S.C."/>
            <person name="McDonough K.A."/>
            <person name="Nilles M.L."/>
            <person name="Matson J.S."/>
            <person name="Blattner F.R."/>
            <person name="Perry R.D."/>
        </authorList>
    </citation>
    <scope>NUCLEOTIDE SEQUENCE [LARGE SCALE GENOMIC DNA]</scope>
    <source>
        <strain>KIM10+ / Biovar Mediaevalis</strain>
    </source>
</reference>
<reference key="3">
    <citation type="journal article" date="2004" name="DNA Res.">
        <title>Complete genome sequence of Yersinia pestis strain 91001, an isolate avirulent to humans.</title>
        <authorList>
            <person name="Song Y."/>
            <person name="Tong Z."/>
            <person name="Wang J."/>
            <person name="Wang L."/>
            <person name="Guo Z."/>
            <person name="Han Y."/>
            <person name="Zhang J."/>
            <person name="Pei D."/>
            <person name="Zhou D."/>
            <person name="Qin H."/>
            <person name="Pang X."/>
            <person name="Han Y."/>
            <person name="Zhai J."/>
            <person name="Li M."/>
            <person name="Cui B."/>
            <person name="Qi Z."/>
            <person name="Jin L."/>
            <person name="Dai R."/>
            <person name="Chen F."/>
            <person name="Li S."/>
            <person name="Ye C."/>
            <person name="Du Z."/>
            <person name="Lin W."/>
            <person name="Wang J."/>
            <person name="Yu J."/>
            <person name="Yang H."/>
            <person name="Wang J."/>
            <person name="Huang P."/>
            <person name="Yang R."/>
        </authorList>
    </citation>
    <scope>NUCLEOTIDE SEQUENCE [LARGE SCALE GENOMIC DNA]</scope>
    <source>
        <strain>91001 / Biovar Mediaevalis</strain>
    </source>
</reference>
<name>PSTA_YERPE</name>
<keyword id="KW-0997">Cell inner membrane</keyword>
<keyword id="KW-1003">Cell membrane</keyword>
<keyword id="KW-0472">Membrane</keyword>
<keyword id="KW-0592">Phosphate transport</keyword>
<keyword id="KW-1185">Reference proteome</keyword>
<keyword id="KW-0812">Transmembrane</keyword>
<keyword id="KW-1133">Transmembrane helix</keyword>
<keyword id="KW-0813">Transport</keyword>
<accession>P58655</accession>
<accession>Q0W9S2</accession>
<protein>
    <recommendedName>
        <fullName>Phosphate transport system permease protein PstA</fullName>
    </recommendedName>
</protein>
<organism>
    <name type="scientific">Yersinia pestis</name>
    <dbReference type="NCBI Taxonomy" id="632"/>
    <lineage>
        <taxon>Bacteria</taxon>
        <taxon>Pseudomonadati</taxon>
        <taxon>Pseudomonadota</taxon>
        <taxon>Gammaproteobacteria</taxon>
        <taxon>Enterobacterales</taxon>
        <taxon>Yersiniaceae</taxon>
        <taxon>Yersinia</taxon>
    </lineage>
</organism>
<proteinExistence type="inferred from homology"/>
<feature type="chain" id="PRO_0000060199" description="Phosphate transport system permease protein PstA">
    <location>
        <begin position="1"/>
        <end position="295"/>
    </location>
</feature>
<feature type="transmembrane region" description="Helical" evidence="2">
    <location>
        <begin position="29"/>
        <end position="49"/>
    </location>
</feature>
<feature type="transmembrane region" description="Helical" evidence="2">
    <location>
        <begin position="88"/>
        <end position="108"/>
    </location>
</feature>
<feature type="transmembrane region" description="Helical" evidence="2">
    <location>
        <begin position="126"/>
        <end position="146"/>
    </location>
</feature>
<feature type="transmembrane region" description="Helical" evidence="2">
    <location>
        <begin position="149"/>
        <end position="169"/>
    </location>
</feature>
<feature type="transmembrane region" description="Helical" evidence="2">
    <location>
        <begin position="198"/>
        <end position="218"/>
    </location>
</feature>
<feature type="transmembrane region" description="Helical" evidence="2">
    <location>
        <begin position="266"/>
        <end position="286"/>
    </location>
</feature>
<feature type="domain" description="ABC transmembrane type-1" evidence="2">
    <location>
        <begin position="83"/>
        <end position="286"/>
    </location>
</feature>
<gene>
    <name type="primary">pstA</name>
    <name type="ordered locus">YPO4115</name>
    <name type="ordered locus">y4129</name>
    <name type="ordered locus">YP_4022</name>
</gene>
<evidence type="ECO:0000250" key="1"/>
<evidence type="ECO:0000255" key="2">
    <source>
        <dbReference type="PROSITE-ProRule" id="PRU00441"/>
    </source>
</evidence>
<evidence type="ECO:0000305" key="3"/>
<comment type="function">
    <text evidence="1">Part of a binding-protein-dependent transport system for phosphate; probably responsible for the translocation of the substrate across the membrane.</text>
</comment>
<comment type="subcellular location">
    <subcellularLocation>
        <location evidence="1">Cell inner membrane</location>
        <topology evidence="2">Multi-pass membrane protein</topology>
    </subcellularLocation>
</comment>
<comment type="similarity">
    <text evidence="3">Belongs to the binding-protein-dependent transport system permease family. CysTW subfamily.</text>
</comment>
<dbReference type="EMBL" id="AL590842">
    <property type="protein sequence ID" value="CAL22683.1"/>
    <property type="molecule type" value="Genomic_DNA"/>
</dbReference>
<dbReference type="EMBL" id="AE009952">
    <property type="protein sequence ID" value="AAM87671.1"/>
    <property type="molecule type" value="Genomic_DNA"/>
</dbReference>
<dbReference type="EMBL" id="AE017042">
    <property type="protein sequence ID" value="AAS64161.1"/>
    <property type="molecule type" value="Genomic_DNA"/>
</dbReference>
<dbReference type="PIR" id="AG0499">
    <property type="entry name" value="AG0499"/>
</dbReference>
<dbReference type="RefSeq" id="WP_002215560.1">
    <property type="nucleotide sequence ID" value="NZ_WUCM01000028.1"/>
</dbReference>
<dbReference type="RefSeq" id="YP_002348966.1">
    <property type="nucleotide sequence ID" value="NC_003143.1"/>
</dbReference>
<dbReference type="SMR" id="P58655"/>
<dbReference type="STRING" id="214092.YPO4115"/>
<dbReference type="PaxDb" id="214092-YPO4115"/>
<dbReference type="DNASU" id="1149076"/>
<dbReference type="EnsemblBacteria" id="AAS64161">
    <property type="protein sequence ID" value="AAS64161"/>
    <property type="gene ID" value="YP_4022"/>
</dbReference>
<dbReference type="GeneID" id="57974609"/>
<dbReference type="KEGG" id="ype:YPO4115"/>
<dbReference type="KEGG" id="ypk:y4129"/>
<dbReference type="KEGG" id="ypm:YP_4022"/>
<dbReference type="PATRIC" id="fig|214092.21.peg.4658"/>
<dbReference type="eggNOG" id="COG0581">
    <property type="taxonomic scope" value="Bacteria"/>
</dbReference>
<dbReference type="HOGENOM" id="CLU_033621_2_0_6"/>
<dbReference type="OMA" id="YDRAWAA"/>
<dbReference type="OrthoDB" id="9775069at2"/>
<dbReference type="Proteomes" id="UP000000815">
    <property type="component" value="Chromosome"/>
</dbReference>
<dbReference type="Proteomes" id="UP000001019">
    <property type="component" value="Chromosome"/>
</dbReference>
<dbReference type="Proteomes" id="UP000002490">
    <property type="component" value="Chromosome"/>
</dbReference>
<dbReference type="GO" id="GO:0005886">
    <property type="term" value="C:plasma membrane"/>
    <property type="evidence" value="ECO:0007669"/>
    <property type="project" value="UniProtKB-SubCell"/>
</dbReference>
<dbReference type="GO" id="GO:0005315">
    <property type="term" value="F:phosphate transmembrane transporter activity"/>
    <property type="evidence" value="ECO:0007669"/>
    <property type="project" value="InterPro"/>
</dbReference>
<dbReference type="GO" id="GO:0035435">
    <property type="term" value="P:phosphate ion transmembrane transport"/>
    <property type="evidence" value="ECO:0007669"/>
    <property type="project" value="InterPro"/>
</dbReference>
<dbReference type="CDD" id="cd06261">
    <property type="entry name" value="TM_PBP2"/>
    <property type="match status" value="1"/>
</dbReference>
<dbReference type="FunFam" id="1.10.3720.10:FF:000026">
    <property type="entry name" value="Phosphate transport system permease protein PstA"/>
    <property type="match status" value="1"/>
</dbReference>
<dbReference type="Gene3D" id="1.10.3720.10">
    <property type="entry name" value="MetI-like"/>
    <property type="match status" value="1"/>
</dbReference>
<dbReference type="InterPro" id="IPR000515">
    <property type="entry name" value="MetI-like"/>
</dbReference>
<dbReference type="InterPro" id="IPR035906">
    <property type="entry name" value="MetI-like_sf"/>
</dbReference>
<dbReference type="InterPro" id="IPR005672">
    <property type="entry name" value="Phosphate_PstA"/>
</dbReference>
<dbReference type="InterPro" id="IPR051408">
    <property type="entry name" value="Phosphate_transprt_permease"/>
</dbReference>
<dbReference type="NCBIfam" id="TIGR00974">
    <property type="entry name" value="3a0107s02c"/>
    <property type="match status" value="1"/>
</dbReference>
<dbReference type="NCBIfam" id="NF008430">
    <property type="entry name" value="PRK11268.1"/>
    <property type="match status" value="1"/>
</dbReference>
<dbReference type="PANTHER" id="PTHR42922">
    <property type="entry name" value="PHOSPHATE TRANSPORT SYSTEM PERMEASE PROTEIN PSTA"/>
    <property type="match status" value="1"/>
</dbReference>
<dbReference type="PANTHER" id="PTHR42922:SF1">
    <property type="entry name" value="PHOSPHATE TRANSPORT SYSTEM PERMEASE PROTEIN PSTA"/>
    <property type="match status" value="1"/>
</dbReference>
<dbReference type="Pfam" id="PF00528">
    <property type="entry name" value="BPD_transp_1"/>
    <property type="match status" value="1"/>
</dbReference>
<dbReference type="SUPFAM" id="SSF161098">
    <property type="entry name" value="MetI-like"/>
    <property type="match status" value="1"/>
</dbReference>
<dbReference type="PROSITE" id="PS50928">
    <property type="entry name" value="ABC_TM1"/>
    <property type="match status" value="1"/>
</dbReference>
<sequence>MVTIDMRNDATLMESRRKKQAWRRQKNRIALVLSMATMLFGLFWLIWILFSTVTKGIDGMSLALFTEMTPPPNTAGGGLANAIAGSGLLILWATVIGTPLGIMAGIYLAEYGRKSWLAEVTRFINDILLSAPSIVVGLFVYTIVVAKMEHFSGWAGVIALALLQVPIVIRTTENMLKLVPDSLREAAYALGTPKWRMISAITLKASVSGILTGILLAIARIAGETAPLLFTSLSNQFWSTDLTRPIANLPVTIFKFAMSPFAEWQNLAWAGVLLITLCVLLLNILARVIFAKKKH</sequence>